<accession>B9M0L9</accession>
<feature type="chain" id="PRO_1000148973" description="1-(5-phosphoribosyl)-5-[(5-phosphoribosylamino)methylideneamino] imidazole-4-carboxamide isomerase">
    <location>
        <begin position="1"/>
        <end position="245"/>
    </location>
</feature>
<feature type="active site" description="Proton acceptor" evidence="1">
    <location>
        <position position="8"/>
    </location>
</feature>
<feature type="active site" description="Proton donor" evidence="1">
    <location>
        <position position="129"/>
    </location>
</feature>
<gene>
    <name evidence="1" type="primary">hisA</name>
    <name type="ordered locus">Geob_0692</name>
</gene>
<protein>
    <recommendedName>
        <fullName evidence="1">1-(5-phosphoribosyl)-5-[(5-phosphoribosylamino)methylideneamino] imidazole-4-carboxamide isomerase</fullName>
        <ecNumber evidence="1">5.3.1.16</ecNumber>
    </recommendedName>
    <alternativeName>
        <fullName evidence="1">Phosphoribosylformimino-5-aminoimidazole carboxamide ribotide isomerase</fullName>
    </alternativeName>
</protein>
<proteinExistence type="inferred from homology"/>
<evidence type="ECO:0000255" key="1">
    <source>
        <dbReference type="HAMAP-Rule" id="MF_01014"/>
    </source>
</evidence>
<reference key="1">
    <citation type="submission" date="2009-01" db="EMBL/GenBank/DDBJ databases">
        <title>Complete sequence of Geobacter sp. FRC-32.</title>
        <authorList>
            <consortium name="US DOE Joint Genome Institute"/>
            <person name="Lucas S."/>
            <person name="Copeland A."/>
            <person name="Lapidus A."/>
            <person name="Glavina del Rio T."/>
            <person name="Dalin E."/>
            <person name="Tice H."/>
            <person name="Bruce D."/>
            <person name="Goodwin L."/>
            <person name="Pitluck S."/>
            <person name="Saunders E."/>
            <person name="Brettin T."/>
            <person name="Detter J.C."/>
            <person name="Han C."/>
            <person name="Larimer F."/>
            <person name="Land M."/>
            <person name="Hauser L."/>
            <person name="Kyrpides N."/>
            <person name="Ovchinnikova G."/>
            <person name="Kostka J."/>
            <person name="Richardson P."/>
        </authorList>
    </citation>
    <scope>NUCLEOTIDE SEQUENCE [LARGE SCALE GENOMIC DNA]</scope>
    <source>
        <strain>DSM 22248 / JCM 15807 / FRC-32</strain>
    </source>
</reference>
<name>HIS4_GEODF</name>
<organism>
    <name type="scientific">Geotalea daltonii (strain DSM 22248 / JCM 15807 / FRC-32)</name>
    <name type="common">Geobacter daltonii</name>
    <dbReference type="NCBI Taxonomy" id="316067"/>
    <lineage>
        <taxon>Bacteria</taxon>
        <taxon>Pseudomonadati</taxon>
        <taxon>Thermodesulfobacteriota</taxon>
        <taxon>Desulfuromonadia</taxon>
        <taxon>Geobacterales</taxon>
        <taxon>Geobacteraceae</taxon>
        <taxon>Geotalea</taxon>
    </lineage>
</organism>
<comment type="catalytic activity">
    <reaction evidence="1">
        <text>1-(5-phospho-beta-D-ribosyl)-5-[(5-phospho-beta-D-ribosylamino)methylideneamino]imidazole-4-carboxamide = 5-[(5-phospho-1-deoxy-D-ribulos-1-ylimino)methylamino]-1-(5-phospho-beta-D-ribosyl)imidazole-4-carboxamide</text>
        <dbReference type="Rhea" id="RHEA:15469"/>
        <dbReference type="ChEBI" id="CHEBI:58435"/>
        <dbReference type="ChEBI" id="CHEBI:58525"/>
        <dbReference type="EC" id="5.3.1.16"/>
    </reaction>
</comment>
<comment type="pathway">
    <text evidence="1">Amino-acid biosynthesis; L-histidine biosynthesis; L-histidine from 5-phospho-alpha-D-ribose 1-diphosphate: step 4/9.</text>
</comment>
<comment type="subcellular location">
    <subcellularLocation>
        <location evidence="1">Cytoplasm</location>
    </subcellularLocation>
</comment>
<comment type="similarity">
    <text evidence="1">Belongs to the HisA/HisF family.</text>
</comment>
<sequence>MIVIPAIDLKEGKCVRLEQGLMERDTVYSDDPAAQALVWEAKGAELLHIVDLDGAFAGEPKNRGAIEAIVKALKITTQLGGGIRDLATIEAYLGMGIGRVIIGTAAQRNPELVQEACRKFPGRIVVGIDAKNGMVAVQGWAEVTGVTAIDLAKKFEGFGVAAIVYTDISRDGMMKGPNIEATRNLAEAITIPVIASGGVSALRDIENLMAVEAAGISGAITGKAIYSGAIELSEAIALTRRGASC</sequence>
<keyword id="KW-0028">Amino-acid biosynthesis</keyword>
<keyword id="KW-0963">Cytoplasm</keyword>
<keyword id="KW-0368">Histidine biosynthesis</keyword>
<keyword id="KW-0413">Isomerase</keyword>
<keyword id="KW-1185">Reference proteome</keyword>
<dbReference type="EC" id="5.3.1.16" evidence="1"/>
<dbReference type="EMBL" id="CP001390">
    <property type="protein sequence ID" value="ACM19056.1"/>
    <property type="molecule type" value="Genomic_DNA"/>
</dbReference>
<dbReference type="RefSeq" id="WP_012645785.1">
    <property type="nucleotide sequence ID" value="NC_011979.1"/>
</dbReference>
<dbReference type="SMR" id="B9M0L9"/>
<dbReference type="STRING" id="316067.Geob_0692"/>
<dbReference type="KEGG" id="geo:Geob_0692"/>
<dbReference type="eggNOG" id="COG0106">
    <property type="taxonomic scope" value="Bacteria"/>
</dbReference>
<dbReference type="HOGENOM" id="CLU_048577_1_1_7"/>
<dbReference type="OrthoDB" id="9807749at2"/>
<dbReference type="UniPathway" id="UPA00031">
    <property type="reaction ID" value="UER00009"/>
</dbReference>
<dbReference type="Proteomes" id="UP000007721">
    <property type="component" value="Chromosome"/>
</dbReference>
<dbReference type="GO" id="GO:0005737">
    <property type="term" value="C:cytoplasm"/>
    <property type="evidence" value="ECO:0007669"/>
    <property type="project" value="UniProtKB-SubCell"/>
</dbReference>
<dbReference type="GO" id="GO:0003949">
    <property type="term" value="F:1-(5-phosphoribosyl)-5-[(5-phosphoribosylamino)methylideneamino]imidazole-4-carboxamide isomerase activity"/>
    <property type="evidence" value="ECO:0007669"/>
    <property type="project" value="UniProtKB-UniRule"/>
</dbReference>
<dbReference type="GO" id="GO:0000105">
    <property type="term" value="P:L-histidine biosynthetic process"/>
    <property type="evidence" value="ECO:0007669"/>
    <property type="project" value="UniProtKB-UniRule"/>
</dbReference>
<dbReference type="GO" id="GO:0000162">
    <property type="term" value="P:L-tryptophan biosynthetic process"/>
    <property type="evidence" value="ECO:0007669"/>
    <property type="project" value="TreeGrafter"/>
</dbReference>
<dbReference type="CDD" id="cd04732">
    <property type="entry name" value="HisA"/>
    <property type="match status" value="1"/>
</dbReference>
<dbReference type="FunFam" id="3.20.20.70:FF:000009">
    <property type="entry name" value="1-(5-phosphoribosyl)-5-[(5-phosphoribosylamino)methylideneamino] imidazole-4-carboxamide isomerase"/>
    <property type="match status" value="1"/>
</dbReference>
<dbReference type="Gene3D" id="3.20.20.70">
    <property type="entry name" value="Aldolase class I"/>
    <property type="match status" value="1"/>
</dbReference>
<dbReference type="HAMAP" id="MF_01014">
    <property type="entry name" value="HisA"/>
    <property type="match status" value="1"/>
</dbReference>
<dbReference type="InterPro" id="IPR013785">
    <property type="entry name" value="Aldolase_TIM"/>
</dbReference>
<dbReference type="InterPro" id="IPR006062">
    <property type="entry name" value="His_biosynth"/>
</dbReference>
<dbReference type="InterPro" id="IPR006063">
    <property type="entry name" value="HisA_bact_arch"/>
</dbReference>
<dbReference type="InterPro" id="IPR044524">
    <property type="entry name" value="Isoase_HisA-like"/>
</dbReference>
<dbReference type="InterPro" id="IPR023016">
    <property type="entry name" value="Isoase_HisA-like_bact"/>
</dbReference>
<dbReference type="InterPro" id="IPR011060">
    <property type="entry name" value="RibuloseP-bd_barrel"/>
</dbReference>
<dbReference type="NCBIfam" id="TIGR00007">
    <property type="entry name" value="1-(5-phosphoribosyl)-5-[(5-phosphoribosylamino)methylideneamino]imidazole-4-carboxamide isomerase"/>
    <property type="match status" value="1"/>
</dbReference>
<dbReference type="NCBIfam" id="NF010112">
    <property type="entry name" value="PRK13585.1"/>
    <property type="match status" value="1"/>
</dbReference>
<dbReference type="PANTHER" id="PTHR43090">
    <property type="entry name" value="1-(5-PHOSPHORIBOSYL)-5-[(5-PHOSPHORIBOSYLAMINO)METHYLIDENEAMINO] IMIDAZOLE-4-CARBOXAMIDE ISOMERASE"/>
    <property type="match status" value="1"/>
</dbReference>
<dbReference type="PANTHER" id="PTHR43090:SF2">
    <property type="entry name" value="1-(5-PHOSPHORIBOSYL)-5-[(5-PHOSPHORIBOSYLAMINO)METHYLIDENEAMINO] IMIDAZOLE-4-CARBOXAMIDE ISOMERASE"/>
    <property type="match status" value="1"/>
</dbReference>
<dbReference type="Pfam" id="PF00977">
    <property type="entry name" value="His_biosynth"/>
    <property type="match status" value="1"/>
</dbReference>
<dbReference type="SUPFAM" id="SSF51366">
    <property type="entry name" value="Ribulose-phoshate binding barrel"/>
    <property type="match status" value="1"/>
</dbReference>